<feature type="signal peptide" evidence="2">
    <location>
        <begin position="1"/>
        <end position="29"/>
    </location>
</feature>
<feature type="chain" id="PRO_0000017008" description="Beta-lactamase">
    <location>
        <begin position="30"/>
        <end position="300"/>
    </location>
</feature>
<feature type="active site" description="Acyl-ester intermediate" evidence="3">
    <location>
        <position position="75"/>
    </location>
</feature>
<feature type="binding site" evidence="1">
    <location>
        <begin position="239"/>
        <end position="241"/>
    </location>
    <ligand>
        <name>substrate</name>
    </ligand>
</feature>
<feature type="sequence variant" description="In strain: 5E78-1.">
    <original>T</original>
    <variation>A</variation>
    <location>
        <position position="13"/>
    </location>
</feature>
<feature type="sequence variant" description="In strain: 5E78-1.">
    <original>V</original>
    <variation>A</variation>
    <location>
        <position position="23"/>
    </location>
</feature>
<feature type="sequence variant" description="In strain: 5E78-1.">
    <original>NT</original>
    <variation>DN</variation>
    <location>
        <begin position="30"/>
        <end position="31"/>
    </location>
</feature>
<feature type="sequence variant" description="In strain: 5E78-1.">
    <original>S</original>
    <variation>N</variation>
    <location>
        <position position="40"/>
    </location>
</feature>
<feature type="sequence variant" description="In strain: 5E78-1.">
    <original>E</original>
    <variation>K</variation>
    <location>
        <position position="58"/>
    </location>
</feature>
<feature type="sequence variant" description="In strain: 5E78-1.">
    <original>E</original>
    <variation>A</variation>
    <location>
        <position position="88"/>
    </location>
</feature>
<feature type="sequence variant" description="In strain: 5E78-1.">
    <original>V</original>
    <variation>T</variation>
    <location>
        <position position="119"/>
    </location>
</feature>
<feature type="sequence variant" description="In strain: 5E78-1.">
    <original>S</original>
    <variation>T</variation>
    <location>
        <position position="123"/>
    </location>
</feature>
<feature type="sequence variant" description="In strain: 5E78-1.">
    <original>Q</original>
    <variation>E</variation>
    <location>
        <position position="126"/>
    </location>
</feature>
<feature type="sequence variant" description="In strain: 5E78-1.">
    <original>H</original>
    <variation>N</variation>
    <location>
        <position position="224"/>
    </location>
</feature>
<feature type="sequence variant" description="In strain: 5E78-1.">
    <original>I</original>
    <variation>V</variation>
    <location>
        <position position="235"/>
    </location>
</feature>
<feature type="sequence variant" description="In strain: 5E78-1.">
    <original>K</original>
    <variation>E</variation>
    <location>
        <position position="257"/>
    </location>
</feature>
<feature type="sequence variant" description="In strain: 5E78-1.">
    <original>V</original>
    <variation>A</variation>
    <location>
        <position position="283"/>
    </location>
</feature>
<feature type="sequence variant" description="In strain: 5E78-1.">
    <original>T</original>
    <variation>A</variation>
    <location>
        <position position="286"/>
    </location>
</feature>
<feature type="helix" evidence="6">
    <location>
        <begin position="34"/>
        <end position="46"/>
    </location>
</feature>
<feature type="strand" evidence="6">
    <location>
        <begin position="48"/>
        <end position="56"/>
    </location>
</feature>
<feature type="turn" evidence="6">
    <location>
        <begin position="57"/>
        <end position="60"/>
    </location>
</feature>
<feature type="strand" evidence="6">
    <location>
        <begin position="61"/>
        <end position="66"/>
    </location>
</feature>
<feature type="helix" evidence="6">
    <location>
        <begin position="74"/>
        <end position="77"/>
    </location>
</feature>
<feature type="helix" evidence="6">
    <location>
        <begin position="78"/>
        <end position="91"/>
    </location>
</feature>
<feature type="helix" evidence="6">
    <location>
        <begin position="95"/>
        <end position="97"/>
    </location>
</feature>
<feature type="helix" evidence="6">
    <location>
        <begin position="104"/>
        <end position="106"/>
    </location>
</feature>
<feature type="helix" evidence="6">
    <location>
        <begin position="114"/>
        <end position="116"/>
    </location>
</feature>
<feature type="turn" evidence="6">
    <location>
        <begin position="118"/>
        <end position="120"/>
    </location>
</feature>
<feature type="helix" evidence="6">
    <location>
        <begin position="124"/>
        <end position="133"/>
    </location>
</feature>
<feature type="helix" evidence="6">
    <location>
        <begin position="137"/>
        <end position="147"/>
    </location>
</feature>
<feature type="helix" evidence="6">
    <location>
        <begin position="150"/>
        <end position="159"/>
    </location>
</feature>
<feature type="helix" evidence="6">
    <location>
        <begin position="173"/>
        <end position="175"/>
    </location>
</feature>
<feature type="helix" evidence="6">
    <location>
        <begin position="188"/>
        <end position="199"/>
    </location>
</feature>
<feature type="strand" evidence="6">
    <location>
        <begin position="201"/>
        <end position="204"/>
    </location>
</feature>
<feature type="helix" evidence="6">
    <location>
        <begin position="206"/>
        <end position="217"/>
    </location>
</feature>
<feature type="turn" evidence="6">
    <location>
        <begin position="223"/>
        <end position="225"/>
    </location>
</feature>
<feature type="helix" evidence="6">
    <location>
        <begin position="226"/>
        <end position="229"/>
    </location>
</feature>
<feature type="strand" evidence="6">
    <location>
        <begin position="234"/>
        <end position="243"/>
    </location>
</feature>
<feature type="turn" evidence="6">
    <location>
        <begin position="244"/>
        <end position="246"/>
    </location>
</feature>
<feature type="strand" evidence="6">
    <location>
        <begin position="247"/>
        <end position="255"/>
    </location>
</feature>
<feature type="strand" evidence="6">
    <location>
        <begin position="262"/>
        <end position="269"/>
    </location>
</feature>
<feature type="helix" evidence="6">
    <location>
        <begin position="279"/>
        <end position="294"/>
    </location>
</feature>
<gene>
    <name type="primary">blaB</name>
    <name type="synonym">cumA</name>
</gene>
<comment type="function">
    <text>Hydrolyzes broad-spectrum beta-lactam antibiotics. Active against cephalosporins such as cefuroxime and cefotaxime.</text>
</comment>
<comment type="catalytic activity">
    <reaction evidence="3">
        <text>a beta-lactam + H2O = a substituted beta-amino acid</text>
        <dbReference type="Rhea" id="RHEA:20401"/>
        <dbReference type="ChEBI" id="CHEBI:15377"/>
        <dbReference type="ChEBI" id="CHEBI:35627"/>
        <dbReference type="ChEBI" id="CHEBI:140347"/>
        <dbReference type="EC" id="3.5.2.6"/>
    </reaction>
</comment>
<comment type="subunit">
    <text evidence="1">Monomer.</text>
</comment>
<comment type="miscellaneous">
    <text evidence="5">The class A beta-lactamase family has a specific amino-acid numbering system, sometimes called Ambler or ABL numbering and often misspelt as Amber. A multiple sequence alignment was used to derive a consensus sequence and then the consensus was numbered taking into account insertions and deletions. This allows use of identical numbers, e.g. for active site residues, despite differences in protein length. UniProt always uses natural numbering of residues, hence there appear to be differences in numbering between this entry and some papers.</text>
</comment>
<comment type="similarity">
    <text evidence="4">Belongs to the class-A beta-lactamase family.</text>
</comment>
<name>BLAB_PROVU</name>
<evidence type="ECO:0000250" key="1"/>
<evidence type="ECO:0000255" key="2"/>
<evidence type="ECO:0000255" key="3">
    <source>
        <dbReference type="PROSITE-ProRule" id="PRU10101"/>
    </source>
</evidence>
<evidence type="ECO:0000305" key="4"/>
<evidence type="ECO:0000305" key="5">
    <source>
    </source>
</evidence>
<evidence type="ECO:0007829" key="6">
    <source>
        <dbReference type="PDB" id="1HZO"/>
    </source>
</evidence>
<accession>P52664</accession>
<proteinExistence type="evidence at protein level"/>
<reference key="1">
    <citation type="journal article" date="1994" name="Eur. J. Biochem.">
        <title>A common system controls the induction of very different genes. The class-A beta-lactamase of Proteus vulgaris and the enterobacterial class-C beta-lactamase.</title>
        <authorList>
            <person name="Datz M."/>
            <person name="Joris B."/>
            <person name="Azab E.A."/>
            <person name="Galleni M."/>
            <person name="van Beeumen J."/>
            <person name="Frere J.-M."/>
            <person name="Martin H.H."/>
        </authorList>
    </citation>
    <scope>NUCLEOTIDE SEQUENCE [GENOMIC DNA]</scope>
    <source>
        <strain>B317</strain>
    </source>
</reference>
<reference key="2">
    <citation type="submission" date="1994-08" db="EMBL/GenBank/DDBJ databases">
        <authorList>
            <person name="Okuguchi M."/>
            <person name="Komai T."/>
            <person name="Makajima N."/>
            <person name="Eguchi H."/>
            <person name="Kuboki A."/>
            <person name="Ito T."/>
            <person name="Meguro M."/>
            <person name="Nakata T."/>
            <person name="Sugimoto K."/>
        </authorList>
    </citation>
    <scope>NUCLEOTIDE SEQUENCE [GENOMIC DNA]</scope>
    <source>
        <strain>5E78-1</strain>
    </source>
</reference>
<reference key="3">
    <citation type="journal article" date="1991" name="Biochem. J.">
        <title>A standard numbering scheme for the class A beta-lactamases.</title>
        <authorList>
            <person name="Ambler R.P."/>
            <person name="Coulson A.F."/>
            <person name="Frere J.M."/>
            <person name="Ghuysen J.M."/>
            <person name="Joris B."/>
            <person name="Forsman M."/>
            <person name="Levesque R.C."/>
            <person name="Tiraby G."/>
            <person name="Waley S.G."/>
        </authorList>
    </citation>
    <scope>AMINO ACID NUMBERING SCHEME</scope>
</reference>
<organism>
    <name type="scientific">Proteus vulgaris</name>
    <dbReference type="NCBI Taxonomy" id="585"/>
    <lineage>
        <taxon>Bacteria</taxon>
        <taxon>Pseudomonadati</taxon>
        <taxon>Pseudomonadota</taxon>
        <taxon>Gammaproteobacteria</taxon>
        <taxon>Enterobacterales</taxon>
        <taxon>Morganellaceae</taxon>
        <taxon>Proteus</taxon>
    </lineage>
</organism>
<dbReference type="EC" id="3.5.2.6"/>
<dbReference type="EMBL" id="X80128">
    <property type="protein sequence ID" value="CAA56427.1"/>
    <property type="molecule type" value="Genomic_DNA"/>
</dbReference>
<dbReference type="EMBL" id="D37831">
    <property type="protein sequence ID" value="BAA07084.1"/>
    <property type="molecule type" value="Genomic_DNA"/>
</dbReference>
<dbReference type="PIR" id="S51044">
    <property type="entry name" value="S51044"/>
</dbReference>
<dbReference type="PDB" id="1HZO">
    <property type="method" value="X-ray"/>
    <property type="resolution" value="1.75 A"/>
    <property type="chains" value="A/B=32-300"/>
</dbReference>
<dbReference type="PDBsum" id="1HZO"/>
<dbReference type="SMR" id="P52664"/>
<dbReference type="STRING" id="585.DR95_683"/>
<dbReference type="DrugBank" id="DB03814">
    <property type="generic name" value="2-(N-morpholino)ethanesulfonic acid"/>
</dbReference>
<dbReference type="DrugBank" id="DB01598">
    <property type="generic name" value="Imipenem"/>
</dbReference>
<dbReference type="EvolutionaryTrace" id="P52664"/>
<dbReference type="GO" id="GO:0008800">
    <property type="term" value="F:beta-lactamase activity"/>
    <property type="evidence" value="ECO:0007669"/>
    <property type="project" value="UniProtKB-EC"/>
</dbReference>
<dbReference type="GO" id="GO:0030655">
    <property type="term" value="P:beta-lactam antibiotic catabolic process"/>
    <property type="evidence" value="ECO:0007669"/>
    <property type="project" value="InterPro"/>
</dbReference>
<dbReference type="GO" id="GO:0046677">
    <property type="term" value="P:response to antibiotic"/>
    <property type="evidence" value="ECO:0007669"/>
    <property type="project" value="UniProtKB-KW"/>
</dbReference>
<dbReference type="Gene3D" id="3.40.710.10">
    <property type="entry name" value="DD-peptidase/beta-lactamase superfamily"/>
    <property type="match status" value="1"/>
</dbReference>
<dbReference type="InterPro" id="IPR012338">
    <property type="entry name" value="Beta-lactam/transpept-like"/>
</dbReference>
<dbReference type="InterPro" id="IPR045155">
    <property type="entry name" value="Beta-lactam_cat"/>
</dbReference>
<dbReference type="InterPro" id="IPR000871">
    <property type="entry name" value="Beta-lactam_class-A"/>
</dbReference>
<dbReference type="InterPro" id="IPR023650">
    <property type="entry name" value="Beta-lactam_class-A_AS"/>
</dbReference>
<dbReference type="NCBIfam" id="NF033103">
    <property type="entry name" value="bla_class_A"/>
    <property type="match status" value="1"/>
</dbReference>
<dbReference type="PANTHER" id="PTHR35333">
    <property type="entry name" value="BETA-LACTAMASE"/>
    <property type="match status" value="1"/>
</dbReference>
<dbReference type="PANTHER" id="PTHR35333:SF3">
    <property type="entry name" value="BETA-LACTAMASE-TYPE TRANSPEPTIDASE FOLD CONTAINING PROTEIN"/>
    <property type="match status" value="1"/>
</dbReference>
<dbReference type="Pfam" id="PF13354">
    <property type="entry name" value="Beta-lactamase2"/>
    <property type="match status" value="1"/>
</dbReference>
<dbReference type="PRINTS" id="PR00118">
    <property type="entry name" value="BLACTAMASEA"/>
</dbReference>
<dbReference type="SUPFAM" id="SSF56601">
    <property type="entry name" value="beta-lactamase/transpeptidase-like"/>
    <property type="match status" value="1"/>
</dbReference>
<dbReference type="PROSITE" id="PS00146">
    <property type="entry name" value="BETA_LACTAMASE_A"/>
    <property type="match status" value="1"/>
</dbReference>
<keyword id="KW-0002">3D-structure</keyword>
<keyword id="KW-0046">Antibiotic resistance</keyword>
<keyword id="KW-0378">Hydrolase</keyword>
<keyword id="KW-0732">Signal</keyword>
<sequence length="300" mass="32992">MTMFKTTFRQTATIAVSLISLLVSPMLWANTNNTIEEQLSTLEKYSQGRLGVALINTEDNSQITYRGEERFAMASTSKVMAVAAVLKESEKQAGLLDKNITIKKSDLVAYSPITEKHLVTGMSLAQLSAATLQYSDNTAMNKILDYLGGPAKVTQFARSINDVTYRLDRKEPELNTAIHGDPRDTTSPIAMAKSLQALTLGDALGQSQRQQLVTWLKGNTTGDHSIKAGLPKHWIVGDKTGSGDYGTTNDIAVIWPKNHAPLILVVYFTQQEQDAKYRKDIIVKATEIVTKEISNSPQTK</sequence>
<protein>
    <recommendedName>
        <fullName>Beta-lactamase</fullName>
        <ecNumber>3.5.2.6</ecNumber>
    </recommendedName>
    <alternativeName>
        <fullName>Cefuroximase</fullName>
    </alternativeName>
</protein>